<dbReference type="EMBL" id="AE015451">
    <property type="protein sequence ID" value="AAN66471.1"/>
    <property type="molecule type" value="Genomic_DNA"/>
</dbReference>
<dbReference type="RefSeq" id="NP_743007.1">
    <property type="nucleotide sequence ID" value="NC_002947.4"/>
</dbReference>
<dbReference type="RefSeq" id="WP_010952066.1">
    <property type="nucleotide sequence ID" value="NZ_CP169744.1"/>
</dbReference>
<dbReference type="SMR" id="Q88PK4"/>
<dbReference type="STRING" id="160488.PP_0846"/>
<dbReference type="PaxDb" id="160488-PP_0846"/>
<dbReference type="GeneID" id="83678199"/>
<dbReference type="KEGG" id="ppu:PP_0846"/>
<dbReference type="PATRIC" id="fig|160488.4.peg.906"/>
<dbReference type="eggNOG" id="COG0443">
    <property type="taxonomic scope" value="Bacteria"/>
</dbReference>
<dbReference type="HOGENOM" id="CLU_005965_2_1_6"/>
<dbReference type="OrthoDB" id="9766019at2"/>
<dbReference type="PhylomeDB" id="Q88PK4"/>
<dbReference type="BioCyc" id="PPUT160488:G1G01-921-MONOMER"/>
<dbReference type="Proteomes" id="UP000000556">
    <property type="component" value="Chromosome"/>
</dbReference>
<dbReference type="GO" id="GO:0005524">
    <property type="term" value="F:ATP binding"/>
    <property type="evidence" value="ECO:0007669"/>
    <property type="project" value="UniProtKB-KW"/>
</dbReference>
<dbReference type="GO" id="GO:0016887">
    <property type="term" value="F:ATP hydrolysis activity"/>
    <property type="evidence" value="ECO:0007669"/>
    <property type="project" value="UniProtKB-UniRule"/>
</dbReference>
<dbReference type="GO" id="GO:0140662">
    <property type="term" value="F:ATP-dependent protein folding chaperone"/>
    <property type="evidence" value="ECO:0007669"/>
    <property type="project" value="InterPro"/>
</dbReference>
<dbReference type="GO" id="GO:0051082">
    <property type="term" value="F:unfolded protein binding"/>
    <property type="evidence" value="ECO:0007669"/>
    <property type="project" value="InterPro"/>
</dbReference>
<dbReference type="GO" id="GO:0016226">
    <property type="term" value="P:iron-sulfur cluster assembly"/>
    <property type="evidence" value="ECO:0007669"/>
    <property type="project" value="InterPro"/>
</dbReference>
<dbReference type="CDD" id="cd10236">
    <property type="entry name" value="ASKHA_NBD_HSP70_HscA"/>
    <property type="match status" value="1"/>
</dbReference>
<dbReference type="FunFam" id="3.30.420.40:FF:000046">
    <property type="entry name" value="Chaperone protein HscA"/>
    <property type="match status" value="1"/>
</dbReference>
<dbReference type="FunFam" id="2.60.34.10:FF:000005">
    <property type="entry name" value="Chaperone protein HscA homolog"/>
    <property type="match status" value="1"/>
</dbReference>
<dbReference type="Gene3D" id="1.20.1270.10">
    <property type="match status" value="1"/>
</dbReference>
<dbReference type="Gene3D" id="3.30.420.40">
    <property type="match status" value="2"/>
</dbReference>
<dbReference type="Gene3D" id="3.90.640.10">
    <property type="entry name" value="Actin, Chain A, domain 4"/>
    <property type="match status" value="1"/>
</dbReference>
<dbReference type="Gene3D" id="2.60.34.10">
    <property type="entry name" value="Substrate Binding Domain Of DNAk, Chain A, domain 1"/>
    <property type="match status" value="1"/>
</dbReference>
<dbReference type="HAMAP" id="MF_00679">
    <property type="entry name" value="HscA"/>
    <property type="match status" value="1"/>
</dbReference>
<dbReference type="InterPro" id="IPR043129">
    <property type="entry name" value="ATPase_NBD"/>
</dbReference>
<dbReference type="InterPro" id="IPR018181">
    <property type="entry name" value="Heat_shock_70_CS"/>
</dbReference>
<dbReference type="InterPro" id="IPR042039">
    <property type="entry name" value="HscA_NBD"/>
</dbReference>
<dbReference type="InterPro" id="IPR029048">
    <property type="entry name" value="HSP70_C_sf"/>
</dbReference>
<dbReference type="InterPro" id="IPR029047">
    <property type="entry name" value="HSP70_peptide-bd_sf"/>
</dbReference>
<dbReference type="InterPro" id="IPR013126">
    <property type="entry name" value="Hsp_70_fam"/>
</dbReference>
<dbReference type="InterPro" id="IPR010236">
    <property type="entry name" value="ISC_FeS_clus_asmbl_HscA"/>
</dbReference>
<dbReference type="NCBIfam" id="TIGR01991">
    <property type="entry name" value="HscA"/>
    <property type="match status" value="1"/>
</dbReference>
<dbReference type="NCBIfam" id="NF003520">
    <property type="entry name" value="PRK05183.1"/>
    <property type="match status" value="1"/>
</dbReference>
<dbReference type="PANTHER" id="PTHR19375">
    <property type="entry name" value="HEAT SHOCK PROTEIN 70KDA"/>
    <property type="match status" value="1"/>
</dbReference>
<dbReference type="Pfam" id="PF00012">
    <property type="entry name" value="HSP70"/>
    <property type="match status" value="1"/>
</dbReference>
<dbReference type="PRINTS" id="PR00301">
    <property type="entry name" value="HEATSHOCK70"/>
</dbReference>
<dbReference type="SUPFAM" id="SSF53067">
    <property type="entry name" value="Actin-like ATPase domain"/>
    <property type="match status" value="2"/>
</dbReference>
<dbReference type="SUPFAM" id="SSF100934">
    <property type="entry name" value="Heat shock protein 70kD (HSP70), C-terminal subdomain"/>
    <property type="match status" value="1"/>
</dbReference>
<dbReference type="SUPFAM" id="SSF100920">
    <property type="entry name" value="Heat shock protein 70kD (HSP70), peptide-binding domain"/>
    <property type="match status" value="1"/>
</dbReference>
<dbReference type="PROSITE" id="PS00297">
    <property type="entry name" value="HSP70_1"/>
    <property type="match status" value="1"/>
</dbReference>
<dbReference type="PROSITE" id="PS00329">
    <property type="entry name" value="HSP70_2"/>
    <property type="match status" value="1"/>
</dbReference>
<dbReference type="PROSITE" id="PS01036">
    <property type="entry name" value="HSP70_3"/>
    <property type="match status" value="2"/>
</dbReference>
<gene>
    <name evidence="1" type="primary">hscA</name>
    <name type="ordered locus">PP_0846</name>
</gene>
<protein>
    <recommendedName>
        <fullName evidence="1">Chaperone protein HscA homolog</fullName>
    </recommendedName>
</protein>
<proteinExistence type="inferred from homology"/>
<sequence length="620" mass="65889">MALLQIAEPGQSPQPHQRRLAVGIDLGTTNSMVAALRSGRSEPLPDAQGNVILPSAVRYLEGRNEVGQAARDAASSDPLNTVLSVKRLMGRGLADVKQLGEQLPYRFVGGESHMPFIDTVQGPKSPVEVSADILKVLRERAEATLGGELVGAVITVPAYFDDAQRQATKDAARLAGLNVLRLLNEPTAAAVAYGLDQNAEGVVAIYDLGGGTFDISILRLTAGVFEVLATGGDTALGGDDFDHAIAGWIIEQAGLSSDLDPATQRALLQTACAAKEALTDADVVSVSHGAWHGELTRNAFEAMIEPLVARSLKACRRAVRDSGVELEEVSAVVMVGGSTRVPRVREAVGALFGRTPLTSIDPDQVVAIGAAIQADTLAGNRREGGELLLLDVIPLSLGLETMGGLMEKVIPRNTTIPVARAQEFTTYKDGQSAMMIHVLQGERELISDCRSLARFELRGIPAMVAGAAKIRVTFQVDADGLLSVAARELGSGVEASIQVKPSYGLTDGEIARMLKDSFEHAGSDKHARQLREHQVDGERLLEAVQGALDADGDRLLSSDERDAIEFQMQELRDLLAGTDGAAIEQQTKRLSQVTDAFAARRLDSTVKAALAGRNLNEIEE</sequence>
<feature type="chain" id="PRO_0000078640" description="Chaperone protein HscA homolog">
    <location>
        <begin position="1"/>
        <end position="620"/>
    </location>
</feature>
<comment type="function">
    <text evidence="1">Chaperone involved in the maturation of iron-sulfur cluster-containing proteins. Has a low intrinsic ATPase activity which is markedly stimulated by HscB.</text>
</comment>
<comment type="similarity">
    <text evidence="1">Belongs to the heat shock protein 70 family.</text>
</comment>
<name>HSCA_PSEPK</name>
<organism>
    <name type="scientific">Pseudomonas putida (strain ATCC 47054 / DSM 6125 / CFBP 8728 / NCIMB 11950 / KT2440)</name>
    <dbReference type="NCBI Taxonomy" id="160488"/>
    <lineage>
        <taxon>Bacteria</taxon>
        <taxon>Pseudomonadati</taxon>
        <taxon>Pseudomonadota</taxon>
        <taxon>Gammaproteobacteria</taxon>
        <taxon>Pseudomonadales</taxon>
        <taxon>Pseudomonadaceae</taxon>
        <taxon>Pseudomonas</taxon>
    </lineage>
</organism>
<reference key="1">
    <citation type="journal article" date="2002" name="Environ. Microbiol.">
        <title>Complete genome sequence and comparative analysis of the metabolically versatile Pseudomonas putida KT2440.</title>
        <authorList>
            <person name="Nelson K.E."/>
            <person name="Weinel C."/>
            <person name="Paulsen I.T."/>
            <person name="Dodson R.J."/>
            <person name="Hilbert H."/>
            <person name="Martins dos Santos V.A.P."/>
            <person name="Fouts D.E."/>
            <person name="Gill S.R."/>
            <person name="Pop M."/>
            <person name="Holmes M."/>
            <person name="Brinkac L.M."/>
            <person name="Beanan M.J."/>
            <person name="DeBoy R.T."/>
            <person name="Daugherty S.C."/>
            <person name="Kolonay J.F."/>
            <person name="Madupu R."/>
            <person name="Nelson W.C."/>
            <person name="White O."/>
            <person name="Peterson J.D."/>
            <person name="Khouri H.M."/>
            <person name="Hance I."/>
            <person name="Chris Lee P."/>
            <person name="Holtzapple E.K."/>
            <person name="Scanlan D."/>
            <person name="Tran K."/>
            <person name="Moazzez A."/>
            <person name="Utterback T.R."/>
            <person name="Rizzo M."/>
            <person name="Lee K."/>
            <person name="Kosack D."/>
            <person name="Moestl D."/>
            <person name="Wedler H."/>
            <person name="Lauber J."/>
            <person name="Stjepandic D."/>
            <person name="Hoheisel J."/>
            <person name="Straetz M."/>
            <person name="Heim S."/>
            <person name="Kiewitz C."/>
            <person name="Eisen J.A."/>
            <person name="Timmis K.N."/>
            <person name="Duesterhoeft A."/>
            <person name="Tuemmler B."/>
            <person name="Fraser C.M."/>
        </authorList>
    </citation>
    <scope>NUCLEOTIDE SEQUENCE [LARGE SCALE GENOMIC DNA]</scope>
    <source>
        <strain>ATCC 47054 / DSM 6125 / CFBP 8728 / NCIMB 11950 / KT2440</strain>
    </source>
</reference>
<keyword id="KW-0067">ATP-binding</keyword>
<keyword id="KW-0143">Chaperone</keyword>
<keyword id="KW-0547">Nucleotide-binding</keyword>
<keyword id="KW-1185">Reference proteome</keyword>
<accession>Q88PK4</accession>
<evidence type="ECO:0000255" key="1">
    <source>
        <dbReference type="HAMAP-Rule" id="MF_00679"/>
    </source>
</evidence>